<comment type="catalytic activity">
    <reaction evidence="1">
        <text>D-erythro-1-(imidazol-4-yl)glycerol 3-phosphate = 3-(imidazol-4-yl)-2-oxopropyl phosphate + H2O</text>
        <dbReference type="Rhea" id="RHEA:11040"/>
        <dbReference type="ChEBI" id="CHEBI:15377"/>
        <dbReference type="ChEBI" id="CHEBI:57766"/>
        <dbReference type="ChEBI" id="CHEBI:58278"/>
        <dbReference type="EC" id="4.2.1.19"/>
    </reaction>
</comment>
<comment type="pathway">
    <text evidence="1">Amino-acid biosynthesis; L-histidine biosynthesis; L-histidine from 5-phospho-alpha-D-ribose 1-diphosphate: step 6/9.</text>
</comment>
<comment type="subcellular location">
    <subcellularLocation>
        <location evidence="1">Cytoplasm</location>
    </subcellularLocation>
</comment>
<comment type="similarity">
    <text evidence="1">Belongs to the imidazoleglycerol-phosphate dehydratase family.</text>
</comment>
<name>HIS7_HYDS0</name>
<dbReference type="EC" id="4.2.1.19" evidence="1"/>
<dbReference type="EMBL" id="CP001130">
    <property type="protein sequence ID" value="ACG57063.1"/>
    <property type="molecule type" value="Genomic_DNA"/>
</dbReference>
<dbReference type="RefSeq" id="WP_012513419.1">
    <property type="nucleotide sequence ID" value="NC_011126.1"/>
</dbReference>
<dbReference type="SMR" id="B4U7F2"/>
<dbReference type="STRING" id="380749.HY04AAS1_0373"/>
<dbReference type="KEGG" id="hya:HY04AAS1_0373"/>
<dbReference type="eggNOG" id="COG0131">
    <property type="taxonomic scope" value="Bacteria"/>
</dbReference>
<dbReference type="HOGENOM" id="CLU_044308_2_0_0"/>
<dbReference type="OrthoDB" id="9790411at2"/>
<dbReference type="UniPathway" id="UPA00031">
    <property type="reaction ID" value="UER00011"/>
</dbReference>
<dbReference type="GO" id="GO:0005737">
    <property type="term" value="C:cytoplasm"/>
    <property type="evidence" value="ECO:0007669"/>
    <property type="project" value="UniProtKB-SubCell"/>
</dbReference>
<dbReference type="GO" id="GO:0004424">
    <property type="term" value="F:imidazoleglycerol-phosphate dehydratase activity"/>
    <property type="evidence" value="ECO:0007669"/>
    <property type="project" value="UniProtKB-UniRule"/>
</dbReference>
<dbReference type="GO" id="GO:0000105">
    <property type="term" value="P:L-histidine biosynthetic process"/>
    <property type="evidence" value="ECO:0007669"/>
    <property type="project" value="UniProtKB-UniRule"/>
</dbReference>
<dbReference type="CDD" id="cd07914">
    <property type="entry name" value="IGPD"/>
    <property type="match status" value="1"/>
</dbReference>
<dbReference type="FunFam" id="3.30.230.40:FF:000003">
    <property type="entry name" value="Imidazoleglycerol-phosphate dehydratase HisB"/>
    <property type="match status" value="1"/>
</dbReference>
<dbReference type="Gene3D" id="3.30.230.40">
    <property type="entry name" value="Imidazole glycerol phosphate dehydratase, domain 1"/>
    <property type="match status" value="2"/>
</dbReference>
<dbReference type="HAMAP" id="MF_00076">
    <property type="entry name" value="HisB"/>
    <property type="match status" value="1"/>
</dbReference>
<dbReference type="InterPro" id="IPR038494">
    <property type="entry name" value="IGPD_sf"/>
</dbReference>
<dbReference type="InterPro" id="IPR000807">
    <property type="entry name" value="ImidazoleglycerolP_deHydtase"/>
</dbReference>
<dbReference type="InterPro" id="IPR020568">
    <property type="entry name" value="Ribosomal_Su5_D2-typ_SF"/>
</dbReference>
<dbReference type="NCBIfam" id="NF002114">
    <property type="entry name" value="PRK00951.2-4"/>
    <property type="match status" value="1"/>
</dbReference>
<dbReference type="PANTHER" id="PTHR23133:SF2">
    <property type="entry name" value="IMIDAZOLEGLYCEROL-PHOSPHATE DEHYDRATASE"/>
    <property type="match status" value="1"/>
</dbReference>
<dbReference type="PANTHER" id="PTHR23133">
    <property type="entry name" value="IMIDAZOLEGLYCEROL-PHOSPHATE DEHYDRATASE HIS7"/>
    <property type="match status" value="1"/>
</dbReference>
<dbReference type="Pfam" id="PF00475">
    <property type="entry name" value="IGPD"/>
    <property type="match status" value="1"/>
</dbReference>
<dbReference type="SUPFAM" id="SSF54211">
    <property type="entry name" value="Ribosomal protein S5 domain 2-like"/>
    <property type="match status" value="2"/>
</dbReference>
<feature type="chain" id="PRO_1000092695" description="Imidazoleglycerol-phosphate dehydratase">
    <location>
        <begin position="1"/>
        <end position="192"/>
    </location>
</feature>
<reference key="1">
    <citation type="journal article" date="2009" name="J. Bacteriol.">
        <title>Complete and draft genome sequences of six members of the Aquificales.</title>
        <authorList>
            <person name="Reysenbach A.-L."/>
            <person name="Hamamura N."/>
            <person name="Podar M."/>
            <person name="Griffiths E."/>
            <person name="Ferreira S."/>
            <person name="Hochstein R."/>
            <person name="Heidelberg J."/>
            <person name="Johnson J."/>
            <person name="Mead D."/>
            <person name="Pohorille A."/>
            <person name="Sarmiento M."/>
            <person name="Schweighofer K."/>
            <person name="Seshadri R."/>
            <person name="Voytek M.A."/>
        </authorList>
    </citation>
    <scope>NUCLEOTIDE SEQUENCE [LARGE SCALE GENOMIC DNA]</scope>
    <source>
        <strain>Y04AAS1</strain>
    </source>
</reference>
<organism>
    <name type="scientific">Hydrogenobaculum sp. (strain Y04AAS1)</name>
    <dbReference type="NCBI Taxonomy" id="380749"/>
    <lineage>
        <taxon>Bacteria</taxon>
        <taxon>Pseudomonadati</taxon>
        <taxon>Aquificota</taxon>
        <taxon>Aquificia</taxon>
        <taxon>Aquificales</taxon>
        <taxon>Aquificaceae</taxon>
        <taxon>Hydrogenobaculum</taxon>
    </lineage>
</organism>
<sequence>MRKAHIFRQTKETAIDMEIDLDGSGVYQIETPVGFLNHMMESFSKHSFIDIKLKAEGDIDVSYHHLVEDVGIVLGQAISKALGDKSGINRYGFAILPMDEALVLCSLDFSGRGLFFYDRKDLRGKITEFDFELIWEFIKGFALESKATVHIKILDGHILHHIAECSIKSLAFSVRQAVAKQDKGILSTKGLL</sequence>
<proteinExistence type="inferred from homology"/>
<gene>
    <name evidence="1" type="primary">hisB</name>
    <name type="ordered locus">HY04AAS1_0373</name>
</gene>
<evidence type="ECO:0000255" key="1">
    <source>
        <dbReference type="HAMAP-Rule" id="MF_00076"/>
    </source>
</evidence>
<keyword id="KW-0028">Amino-acid biosynthesis</keyword>
<keyword id="KW-0963">Cytoplasm</keyword>
<keyword id="KW-0368">Histidine biosynthesis</keyword>
<keyword id="KW-0456">Lyase</keyword>
<accession>B4U7F2</accession>
<protein>
    <recommendedName>
        <fullName evidence="1">Imidazoleglycerol-phosphate dehydratase</fullName>
        <shortName evidence="1">IGPD</shortName>
        <ecNumber evidence="1">4.2.1.19</ecNumber>
    </recommendedName>
</protein>